<evidence type="ECO:0000250" key="1">
    <source>
        <dbReference type="UniProtKB" id="B3FK34"/>
    </source>
</evidence>
<evidence type="ECO:0000250" key="2">
    <source>
        <dbReference type="UniProtKB" id="Q74P24"/>
    </source>
</evidence>
<evidence type="ECO:0000250" key="3">
    <source>
        <dbReference type="UniProtKB" id="Q8KNP3"/>
    </source>
</evidence>
<evidence type="ECO:0000256" key="4">
    <source>
        <dbReference type="SAM" id="MobiDB-lite"/>
    </source>
</evidence>
<evidence type="ECO:0000305" key="5"/>
<protein>
    <recommendedName>
        <fullName evidence="5">Tubulin-like protein TubZ</fullName>
        <ecNumber evidence="2">3.6.5.-</ecNumber>
    </recommendedName>
    <alternativeName>
        <fullName evidence="5">FtsZ/tubulin-like protein TubZ</fullName>
    </alternativeName>
    <alternativeName>
        <fullName evidence="5">Plasmid replication protein RepX</fullName>
    </alternativeName>
</protein>
<keyword id="KW-0963">Cytoplasm</keyword>
<keyword id="KW-0342">GTP-binding</keyword>
<keyword id="KW-0378">Hydrolase</keyword>
<keyword id="KW-0547">Nucleotide-binding</keyword>
<keyword id="KW-0614">Plasmid</keyword>
<keyword id="KW-0616">Plasmid partition</keyword>
<name>TUBZ_BACCE</name>
<proteinExistence type="inferred from homology"/>
<sequence length="435" mass="48735">MAGNFSEIESQGNISLKFGFLGLGMGGCAIAAECANKETQIKNNKYPYRAILVNTNSQDFNKIEIKNAGNVRKIQLEGYEQGAARNPQVGEEAFVKHETKIFETVKQEFEDRDFIWITCGLGGGTGTGALLKAIEMLYEHDYNFGLLLTLPRDAEALKVLENATSRIRSIAMNQEAFGSIVLIDNAKLYRKFEEENPSALANEYTSYSNKYIADALHEINLVTSSFTPFSDTHFDASEFAQVINTPGVLSLAKLELKSNQLDTENPLGYLTQLGNALEKGVLYDTEREELESAKKSALSIVTSPLRASRLYNFSFLNQMENFLKDRTPYVDERPIAPYVNKHTAKKEEDIVKFYSVVAGLPLPKRVSDIIDEITRIKEEREQANSKKSNAVLNKLFAFDDSVQEEKPKKKKLNFGAEPEVEVADDSQPTKKKLSF</sequence>
<comment type="function">
    <text evidence="2 3">A tubulin-like, filament forming GTPase; the motor component of the type III plasmid partition system which ensures correct segregation of the pBCXO1 plasmid. It is essential for plasmid replication (By similarity). Binds GTP and forms filaments. The filaments seed from a DNA centromere-like site (tubC)-TubR complex which extends to surround the TubZ filaments. Highly dynamic filaments grow at the plus end and depolymerize at the minus end, a process called treadmilling. TubR-tubC complexes track the depolymerizing minus end of the filament, probably pulling plasmid within the cell (By similarity).</text>
</comment>
<comment type="catalytic activity">
    <reaction evidence="2">
        <text>GTP + H2O = GDP + phosphate + H(+)</text>
        <dbReference type="Rhea" id="RHEA:19669"/>
        <dbReference type="ChEBI" id="CHEBI:15377"/>
        <dbReference type="ChEBI" id="CHEBI:15378"/>
        <dbReference type="ChEBI" id="CHEBI:37565"/>
        <dbReference type="ChEBI" id="CHEBI:43474"/>
        <dbReference type="ChEBI" id="CHEBI:58189"/>
    </reaction>
</comment>
<comment type="subunit">
    <text evidence="3">Forms filaments. Binds to the TubR-tubC protein DNA complex.</text>
</comment>
<comment type="subcellular location">
    <subcellularLocation>
        <location evidence="5">Cytoplasm</location>
    </subcellularLocation>
    <text evidence="3">Forms long, dynamic filaments.</text>
</comment>
<comment type="domain">
    <text evidence="1 2">Consists of two domains: a nucleotide-binding N-terminus that hydrolyzes GTP and a C-terminus domain necessary for polymerization. The domains are bridged by a long, central helix (By similarity). Interactions between the C-terminus and the following monomer drive polymerization (By similarity).</text>
</comment>
<comment type="similarity">
    <text evidence="5">Belongs to the FtsZ family. TubZ subfamily.</text>
</comment>
<accession>Q4MKK8</accession>
<geneLocation type="plasmid">
    <name>pBCXO1</name>
</geneLocation>
<reference key="1">
    <citation type="journal article" date="2004" name="Proc. Natl. Acad. Sci. U.S.A.">
        <title>Identification of anthrax toxin genes in a Bacillus cereus associated with an illness resembling inhalation anthrax.</title>
        <authorList>
            <person name="Hoffmaster A.R."/>
            <person name="Ravel J."/>
            <person name="Rasko D.A."/>
            <person name="Chapman G.D."/>
            <person name="Chute M.D."/>
            <person name="Marston C.K."/>
            <person name="De B.K."/>
            <person name="Sacchi C.T."/>
            <person name="Fitzgerald C."/>
            <person name="Mayer L.W."/>
            <person name="Maiden M.C.J."/>
            <person name="Priest F.G."/>
            <person name="Barker M."/>
            <person name="Jiang L."/>
            <person name="Cer R.Z."/>
            <person name="Rilstone J."/>
            <person name="Peterson S.N."/>
            <person name="Weyant R.S."/>
            <person name="Galloway D.R."/>
            <person name="Read T.D."/>
            <person name="Popovic T."/>
            <person name="Fraser C.M."/>
        </authorList>
    </citation>
    <scope>NUCLEOTIDE SEQUENCE [GENOMIC DNA]</scope>
    <source>
        <strain>G9241</strain>
    </source>
</reference>
<gene>
    <name type="primary">tubZ</name>
    <name type="synonym">repX</name>
    <name type="ORF">BCE_G9241_pBCXO1_0052</name>
</gene>
<feature type="chain" id="PRO_0000233627" description="Tubulin-like protein TubZ">
    <location>
        <begin position="1"/>
        <end position="435"/>
    </location>
</feature>
<feature type="region of interest" description="Disordered" evidence="4">
    <location>
        <begin position="403"/>
        <end position="435"/>
    </location>
</feature>
<feature type="binding site" evidence="3">
    <location>
        <begin position="25"/>
        <end position="26"/>
    </location>
    <ligand>
        <name>GTP</name>
        <dbReference type="ChEBI" id="CHEBI:37565"/>
    </ligand>
</feature>
<feature type="binding site" evidence="3">
    <location>
        <begin position="124"/>
        <end position="126"/>
    </location>
    <ligand>
        <name>GTP</name>
        <dbReference type="ChEBI" id="CHEBI:37565"/>
    </ligand>
</feature>
<feature type="binding site" evidence="3">
    <location>
        <position position="185"/>
    </location>
    <ligand>
        <name>GTP</name>
        <dbReference type="ChEBI" id="CHEBI:37565"/>
    </ligand>
</feature>
<feature type="binding site" evidence="3">
    <location>
        <position position="209"/>
    </location>
    <ligand>
        <name>GTP</name>
        <dbReference type="ChEBI" id="CHEBI:37565"/>
    </ligand>
</feature>
<organism>
    <name type="scientific">Bacillus cereus</name>
    <dbReference type="NCBI Taxonomy" id="1396"/>
    <lineage>
        <taxon>Bacteria</taxon>
        <taxon>Bacillati</taxon>
        <taxon>Bacillota</taxon>
        <taxon>Bacilli</taxon>
        <taxon>Bacillales</taxon>
        <taxon>Bacillaceae</taxon>
        <taxon>Bacillus</taxon>
        <taxon>Bacillus cereus group</taxon>
    </lineage>
</organism>
<dbReference type="EC" id="3.6.5.-" evidence="2"/>
<dbReference type="EMBL" id="AAEK01000038">
    <property type="protein sequence ID" value="EAL12705.1"/>
    <property type="molecule type" value="Genomic_DNA"/>
</dbReference>
<dbReference type="RefSeq" id="WP_000918303.1">
    <property type="nucleotide sequence ID" value="NC_010934.1"/>
</dbReference>
<dbReference type="SMR" id="Q4MKK8"/>
<dbReference type="PATRIC" id="fig|1396.419.peg.790"/>
<dbReference type="eggNOG" id="COG0206">
    <property type="taxonomic scope" value="Bacteria"/>
</dbReference>
<dbReference type="GO" id="GO:0032153">
    <property type="term" value="C:cell division site"/>
    <property type="evidence" value="ECO:0007669"/>
    <property type="project" value="TreeGrafter"/>
</dbReference>
<dbReference type="GO" id="GO:0005737">
    <property type="term" value="C:cytoplasm"/>
    <property type="evidence" value="ECO:0007669"/>
    <property type="project" value="UniProtKB-SubCell"/>
</dbReference>
<dbReference type="GO" id="GO:0005525">
    <property type="term" value="F:GTP binding"/>
    <property type="evidence" value="ECO:0007669"/>
    <property type="project" value="UniProtKB-KW"/>
</dbReference>
<dbReference type="GO" id="GO:0003924">
    <property type="term" value="F:GTPase activity"/>
    <property type="evidence" value="ECO:0007669"/>
    <property type="project" value="InterPro"/>
</dbReference>
<dbReference type="GO" id="GO:0051301">
    <property type="term" value="P:cell division"/>
    <property type="evidence" value="ECO:0007669"/>
    <property type="project" value="TreeGrafter"/>
</dbReference>
<dbReference type="GO" id="GO:0030541">
    <property type="term" value="P:plasmid partitioning"/>
    <property type="evidence" value="ECO:0007669"/>
    <property type="project" value="UniProtKB-KW"/>
</dbReference>
<dbReference type="Gene3D" id="3.40.50.1440">
    <property type="entry name" value="Tubulin/FtsZ, GTPase domain"/>
    <property type="match status" value="1"/>
</dbReference>
<dbReference type="InterPro" id="IPR045061">
    <property type="entry name" value="FtsZ/CetZ"/>
</dbReference>
<dbReference type="InterPro" id="IPR036525">
    <property type="entry name" value="Tubulin/FtsZ_GTPase_sf"/>
</dbReference>
<dbReference type="InterPro" id="IPR003008">
    <property type="entry name" value="Tubulin_FtsZ_GTPase"/>
</dbReference>
<dbReference type="InterPro" id="IPR049364">
    <property type="entry name" value="TubZ_C"/>
</dbReference>
<dbReference type="PANTHER" id="PTHR30314">
    <property type="entry name" value="CELL DIVISION PROTEIN FTSZ-RELATED"/>
    <property type="match status" value="1"/>
</dbReference>
<dbReference type="PANTHER" id="PTHR30314:SF3">
    <property type="entry name" value="MITOCHONDRIAL DIVISION PROTEIN FSZA"/>
    <property type="match status" value="1"/>
</dbReference>
<dbReference type="Pfam" id="PF00091">
    <property type="entry name" value="Tubulin"/>
    <property type="match status" value="1"/>
</dbReference>
<dbReference type="Pfam" id="PF21493">
    <property type="entry name" value="TubZ_C"/>
    <property type="match status" value="1"/>
</dbReference>
<dbReference type="SMART" id="SM00864">
    <property type="entry name" value="Tubulin"/>
    <property type="match status" value="1"/>
</dbReference>
<dbReference type="SUPFAM" id="SSF52490">
    <property type="entry name" value="Tubulin nucleotide-binding domain-like"/>
    <property type="match status" value="1"/>
</dbReference>